<protein>
    <recommendedName>
        <fullName>Uncharacterized GTP-binding protein VNG_1111G</fullName>
    </recommendedName>
</protein>
<gene>
    <name type="ordered locus">VNG_1111G</name>
</gene>
<accession>P17103</accession>
<accession>Q9HQL0</accession>
<comment type="similarity">
    <text evidence="1">Belongs to the TRAFAC class OBG-HflX-like GTPase superfamily. OBG GTPase family.</text>
</comment>
<name>Y1111_HALSA</name>
<organism>
    <name type="scientific">Halobacterium salinarum (strain ATCC 700922 / JCM 11081 / NRC-1)</name>
    <name type="common">Halobacterium halobium</name>
    <dbReference type="NCBI Taxonomy" id="64091"/>
    <lineage>
        <taxon>Archaea</taxon>
        <taxon>Methanobacteriati</taxon>
        <taxon>Methanobacteriota</taxon>
        <taxon>Stenosarchaea group</taxon>
        <taxon>Halobacteria</taxon>
        <taxon>Halobacteriales</taxon>
        <taxon>Halobacteriaceae</taxon>
        <taxon>Halobacterium</taxon>
        <taxon>Halobacterium salinarum NRC-34001</taxon>
    </lineage>
</organism>
<dbReference type="EMBL" id="X15078">
    <property type="protein sequence ID" value="CAA33176.1"/>
    <property type="molecule type" value="Genomic_DNA"/>
</dbReference>
<dbReference type="EMBL" id="AE004437">
    <property type="protein sequence ID" value="AAG19503.1"/>
    <property type="molecule type" value="Genomic_DNA"/>
</dbReference>
<dbReference type="PIR" id="C84267">
    <property type="entry name" value="C84267"/>
</dbReference>
<dbReference type="PIR" id="S04116">
    <property type="entry name" value="QQHS4C"/>
</dbReference>
<dbReference type="RefSeq" id="WP_010902798.1">
    <property type="nucleotide sequence ID" value="NC_002607.1"/>
</dbReference>
<dbReference type="SMR" id="P17103"/>
<dbReference type="FunCoup" id="P17103">
    <property type="interactions" value="155"/>
</dbReference>
<dbReference type="STRING" id="64091.VNG_1111G"/>
<dbReference type="PaxDb" id="64091-VNG_1111G"/>
<dbReference type="KEGG" id="hal:VNG_1111G"/>
<dbReference type="PATRIC" id="fig|64091.14.peg.849"/>
<dbReference type="HOGENOM" id="CLU_044997_0_0_2"/>
<dbReference type="InParanoid" id="P17103"/>
<dbReference type="OrthoDB" id="372125at2157"/>
<dbReference type="PhylomeDB" id="P17103"/>
<dbReference type="Proteomes" id="UP000000554">
    <property type="component" value="Chromosome"/>
</dbReference>
<dbReference type="GO" id="GO:0005737">
    <property type="term" value="C:cytoplasm"/>
    <property type="evidence" value="ECO:0000318"/>
    <property type="project" value="GO_Central"/>
</dbReference>
<dbReference type="GO" id="GO:0005525">
    <property type="term" value="F:GTP binding"/>
    <property type="evidence" value="ECO:0000318"/>
    <property type="project" value="GO_Central"/>
</dbReference>
<dbReference type="GO" id="GO:0003924">
    <property type="term" value="F:GTPase activity"/>
    <property type="evidence" value="ECO:0007669"/>
    <property type="project" value="InterPro"/>
</dbReference>
<dbReference type="GO" id="GO:0002181">
    <property type="term" value="P:cytoplasmic translation"/>
    <property type="evidence" value="ECO:0000318"/>
    <property type="project" value="GO_Central"/>
</dbReference>
<dbReference type="CDD" id="cd01896">
    <property type="entry name" value="DRG"/>
    <property type="match status" value="1"/>
</dbReference>
<dbReference type="Gene3D" id="3.10.20.30">
    <property type="match status" value="1"/>
</dbReference>
<dbReference type="Gene3D" id="6.10.140.1070">
    <property type="match status" value="1"/>
</dbReference>
<dbReference type="Gene3D" id="3.40.50.300">
    <property type="entry name" value="P-loop containing nucleotide triphosphate hydrolases"/>
    <property type="match status" value="1"/>
</dbReference>
<dbReference type="InterPro" id="IPR012675">
    <property type="entry name" value="Beta-grasp_dom_sf"/>
</dbReference>
<dbReference type="InterPro" id="IPR045001">
    <property type="entry name" value="DRG"/>
</dbReference>
<dbReference type="InterPro" id="IPR031167">
    <property type="entry name" value="G_OBG"/>
</dbReference>
<dbReference type="InterPro" id="IPR006073">
    <property type="entry name" value="GTP-bd"/>
</dbReference>
<dbReference type="InterPro" id="IPR031662">
    <property type="entry name" value="GTP-binding_2"/>
</dbReference>
<dbReference type="InterPro" id="IPR006074">
    <property type="entry name" value="GTP1-OBG_CS"/>
</dbReference>
<dbReference type="InterPro" id="IPR027417">
    <property type="entry name" value="P-loop_NTPase"/>
</dbReference>
<dbReference type="InterPro" id="IPR005225">
    <property type="entry name" value="Small_GTP-bd"/>
</dbReference>
<dbReference type="InterPro" id="IPR004095">
    <property type="entry name" value="TGS"/>
</dbReference>
<dbReference type="InterPro" id="IPR012676">
    <property type="entry name" value="TGS-like"/>
</dbReference>
<dbReference type="NCBIfam" id="TIGR00231">
    <property type="entry name" value="small_GTP"/>
    <property type="match status" value="1"/>
</dbReference>
<dbReference type="PANTHER" id="PTHR43127">
    <property type="entry name" value="DEVELOPMENTALLY-REGULATED GTP-BINDING PROTEIN 2"/>
    <property type="match status" value="1"/>
</dbReference>
<dbReference type="Pfam" id="PF01926">
    <property type="entry name" value="MMR_HSR1"/>
    <property type="match status" value="1"/>
</dbReference>
<dbReference type="Pfam" id="PF16897">
    <property type="entry name" value="MMR_HSR1_Xtn"/>
    <property type="match status" value="1"/>
</dbReference>
<dbReference type="Pfam" id="PF02824">
    <property type="entry name" value="TGS"/>
    <property type="match status" value="1"/>
</dbReference>
<dbReference type="PRINTS" id="PR00326">
    <property type="entry name" value="GTP1OBG"/>
</dbReference>
<dbReference type="SUPFAM" id="SSF52540">
    <property type="entry name" value="P-loop containing nucleoside triphosphate hydrolases"/>
    <property type="match status" value="1"/>
</dbReference>
<dbReference type="SUPFAM" id="SSF81271">
    <property type="entry name" value="TGS-like"/>
    <property type="match status" value="1"/>
</dbReference>
<dbReference type="PROSITE" id="PS51710">
    <property type="entry name" value="G_OBG"/>
    <property type="match status" value="1"/>
</dbReference>
<dbReference type="PROSITE" id="PS00905">
    <property type="entry name" value="GTP1_OBG"/>
    <property type="match status" value="1"/>
</dbReference>
<dbReference type="PROSITE" id="PS51880">
    <property type="entry name" value="TGS"/>
    <property type="match status" value="1"/>
</dbReference>
<evidence type="ECO:0000255" key="1">
    <source>
        <dbReference type="PROSITE-ProRule" id="PRU01047"/>
    </source>
</evidence>
<evidence type="ECO:0000255" key="2">
    <source>
        <dbReference type="PROSITE-ProRule" id="PRU01228"/>
    </source>
</evidence>
<feature type="chain" id="PRO_0000205443" description="Uncharacterized GTP-binding protein VNG_1111G">
    <location>
        <begin position="1"/>
        <end position="370"/>
    </location>
</feature>
<feature type="domain" description="OBG-type G" evidence="1">
    <location>
        <begin position="62"/>
        <end position="293"/>
    </location>
</feature>
<feature type="domain" description="TGS" evidence="2">
    <location>
        <begin position="293"/>
        <end position="368"/>
    </location>
</feature>
<feature type="binding site" evidence="1">
    <location>
        <begin position="68"/>
        <end position="75"/>
    </location>
    <ligand>
        <name>GTP</name>
        <dbReference type="ChEBI" id="CHEBI:37565"/>
    </ligand>
</feature>
<feature type="binding site" evidence="1">
    <location>
        <begin position="114"/>
        <end position="118"/>
    </location>
    <ligand>
        <name>GTP</name>
        <dbReference type="ChEBI" id="CHEBI:37565"/>
    </ligand>
</feature>
<feature type="binding site" evidence="1">
    <location>
        <begin position="243"/>
        <end position="246"/>
    </location>
    <ligand>
        <name>GTP</name>
        <dbReference type="ChEBI" id="CHEBI:37565"/>
    </ligand>
</feature>
<proteinExistence type="inferred from homology"/>
<reference key="1">
    <citation type="journal article" date="1989" name="EMBO J.">
        <title>Characterization of the L11, L1, L10 and L12 equivalent ribosomal protein gene cluster of the halophilic archaebacterium Halobacterium cutirubrum.</title>
        <authorList>
            <person name="Shimmin L.C."/>
            <person name="Dennis P.P."/>
        </authorList>
    </citation>
    <scope>NUCLEOTIDE SEQUENCE [GENOMIC DNA]</scope>
    <source>
        <strain>ATCC 33170 / DSM 669 / NCCB 81095 / NRC 34001</strain>
    </source>
</reference>
<reference key="2">
    <citation type="journal article" date="2000" name="Proc. Natl. Acad. Sci. U.S.A.">
        <title>Genome sequence of Halobacterium species NRC-1.</title>
        <authorList>
            <person name="Ng W.V."/>
            <person name="Kennedy S.P."/>
            <person name="Mahairas G.G."/>
            <person name="Berquist B."/>
            <person name="Pan M."/>
            <person name="Shukla H.D."/>
            <person name="Lasky S.R."/>
            <person name="Baliga N.S."/>
            <person name="Thorsson V."/>
            <person name="Sbrogna J."/>
            <person name="Swartzell S."/>
            <person name="Weir D."/>
            <person name="Hall J."/>
            <person name="Dahl T.A."/>
            <person name="Welti R."/>
            <person name="Goo Y.A."/>
            <person name="Leithauser B."/>
            <person name="Keller K."/>
            <person name="Cruz R."/>
            <person name="Danson M.J."/>
            <person name="Hough D.W."/>
            <person name="Maddocks D.G."/>
            <person name="Jablonski P.E."/>
            <person name="Krebs M.P."/>
            <person name="Angevine C.M."/>
            <person name="Dale H."/>
            <person name="Isenbarger T.A."/>
            <person name="Peck R.F."/>
            <person name="Pohlschroder M."/>
            <person name="Spudich J.L."/>
            <person name="Jung K.-H."/>
            <person name="Alam M."/>
            <person name="Freitas T."/>
            <person name="Hou S."/>
            <person name="Daniels C.J."/>
            <person name="Dennis P.P."/>
            <person name="Omer A.D."/>
            <person name="Ebhardt H."/>
            <person name="Lowe T.M."/>
            <person name="Liang P."/>
            <person name="Riley M."/>
            <person name="Hood L."/>
            <person name="DasSarma S."/>
        </authorList>
    </citation>
    <scope>NUCLEOTIDE SEQUENCE [LARGE SCALE GENOMIC DNA]</scope>
    <source>
        <strain>ATCC 700922 / JCM 11081 / NRC-1</strain>
    </source>
</reference>
<sequence>MGLEEDIESLEEEIANTPYNKSTEAHIGRLKAKLAEQKEKLEAQQSGSGGGGGYAVEQHGDATVALVGFPSVGKSSLINAMTNADSEVGAYEFTTLNVNPGMLEYRGANIQLLDVPGLIEGAAGGRGGGKEILSVIRGADLVIFVLSAFEIEQYDRLAEELYNVNIRVDAEPPSVTVRRKGKDGIDVNTSGELELDSDTVKGILRERGFINANVTIRGNPSVDRLIDGVMDNRVYMPSLVTVNKVDLIEPSYAGTMKDALRDHGVSPDDAIFISAAEEKGLDVLKERMWRALGLIRIYMDKPGRGVDREEPLIIRRGETVDDAVQKLGGTLDERFRFARVTGPSAQHDDQQVGRDHVLEDEDVLRVVARR</sequence>
<keyword id="KW-0342">GTP-binding</keyword>
<keyword id="KW-0547">Nucleotide-binding</keyword>
<keyword id="KW-1185">Reference proteome</keyword>